<evidence type="ECO:0000255" key="1">
    <source>
        <dbReference type="HAMAP-Rule" id="MF_01437"/>
    </source>
</evidence>
<keyword id="KW-0997">Cell inner membrane</keyword>
<keyword id="KW-1003">Cell membrane</keyword>
<keyword id="KW-0444">Lipid biosynthesis</keyword>
<keyword id="KW-0443">Lipid metabolism</keyword>
<keyword id="KW-0472">Membrane</keyword>
<keyword id="KW-0594">Phospholipid biosynthesis</keyword>
<keyword id="KW-1208">Phospholipid metabolism</keyword>
<keyword id="KW-0808">Transferase</keyword>
<keyword id="KW-0812">Transmembrane</keyword>
<keyword id="KW-1133">Transmembrane helix</keyword>
<organism>
    <name type="scientific">Yersinia pestis bv. Antiqua (strain Antiqua)</name>
    <dbReference type="NCBI Taxonomy" id="360102"/>
    <lineage>
        <taxon>Bacteria</taxon>
        <taxon>Pseudomonadati</taxon>
        <taxon>Pseudomonadota</taxon>
        <taxon>Gammaproteobacteria</taxon>
        <taxon>Enterobacterales</taxon>
        <taxon>Yersiniaceae</taxon>
        <taxon>Yersinia</taxon>
    </lineage>
</organism>
<comment type="function">
    <text evidence="1">Catalyzes the conversion of cytidine diphosphate diacylglycerol (CDP-DG) and glycerol 3-phosphate into phosphatidylglycerol. Essential for the synthesis of anionic phospholipids, thereby playing a role in balancing the ratio of zwitterionic and anionic phospholipids, which is thought to be important for normal membrane function.</text>
</comment>
<comment type="catalytic activity">
    <reaction evidence="1">
        <text>a CDP-1,2-diacyl-sn-glycerol + sn-glycerol 3-phosphate = a 1,2-diacyl-sn-glycero-3-phospho-(1'-sn-glycero-3'-phosphate) + CMP + H(+)</text>
        <dbReference type="Rhea" id="RHEA:12593"/>
        <dbReference type="ChEBI" id="CHEBI:15378"/>
        <dbReference type="ChEBI" id="CHEBI:57597"/>
        <dbReference type="ChEBI" id="CHEBI:58332"/>
        <dbReference type="ChEBI" id="CHEBI:60110"/>
        <dbReference type="ChEBI" id="CHEBI:60377"/>
        <dbReference type="EC" id="2.7.8.5"/>
    </reaction>
</comment>
<comment type="pathway">
    <text evidence="1">Phospholipid metabolism; phosphatidylglycerol biosynthesis; phosphatidylglycerol from CDP-diacylglycerol: step 1/2.</text>
</comment>
<comment type="subcellular location">
    <subcellularLocation>
        <location evidence="1">Cell inner membrane</location>
        <topology evidence="1">Multi-pass membrane protein</topology>
    </subcellularLocation>
</comment>
<comment type="similarity">
    <text evidence="1">Belongs to the CDP-alcohol phosphatidyltransferase class-I family.</text>
</comment>
<gene>
    <name evidence="1" type="primary">pgsA</name>
    <name type="ordered locus">YPA_1245</name>
</gene>
<name>PGSA_YERPA</name>
<reference key="1">
    <citation type="journal article" date="2006" name="J. Bacteriol.">
        <title>Complete genome sequence of Yersinia pestis strains Antiqua and Nepal516: evidence of gene reduction in an emerging pathogen.</title>
        <authorList>
            <person name="Chain P.S.G."/>
            <person name="Hu P."/>
            <person name="Malfatti S.A."/>
            <person name="Radnedge L."/>
            <person name="Larimer F."/>
            <person name="Vergez L.M."/>
            <person name="Worsham P."/>
            <person name="Chu M.C."/>
            <person name="Andersen G.L."/>
        </authorList>
    </citation>
    <scope>NUCLEOTIDE SEQUENCE [LARGE SCALE GENOMIC DNA]</scope>
    <source>
        <strain>Antiqua</strain>
    </source>
</reference>
<dbReference type="EC" id="2.7.8.5" evidence="1"/>
<dbReference type="EMBL" id="CP000308">
    <property type="protein sequence ID" value="ABG13212.1"/>
    <property type="molecule type" value="Genomic_DNA"/>
</dbReference>
<dbReference type="RefSeq" id="WP_002220475.1">
    <property type="nucleotide sequence ID" value="NZ_CP009906.1"/>
</dbReference>
<dbReference type="SMR" id="Q1C8L0"/>
<dbReference type="GeneID" id="96665312"/>
<dbReference type="KEGG" id="ypa:YPA_1245"/>
<dbReference type="UniPathway" id="UPA00084">
    <property type="reaction ID" value="UER00503"/>
</dbReference>
<dbReference type="Proteomes" id="UP000001971">
    <property type="component" value="Chromosome"/>
</dbReference>
<dbReference type="GO" id="GO:0005886">
    <property type="term" value="C:plasma membrane"/>
    <property type="evidence" value="ECO:0007669"/>
    <property type="project" value="UniProtKB-SubCell"/>
</dbReference>
<dbReference type="GO" id="GO:0008444">
    <property type="term" value="F:CDP-diacylglycerol-glycerol-3-phosphate 3-phosphatidyltransferase activity"/>
    <property type="evidence" value="ECO:0007669"/>
    <property type="project" value="UniProtKB-UniRule"/>
</dbReference>
<dbReference type="GO" id="GO:0006655">
    <property type="term" value="P:phosphatidylglycerol biosynthetic process"/>
    <property type="evidence" value="ECO:0007669"/>
    <property type="project" value="UniProtKB-UniRule"/>
</dbReference>
<dbReference type="FunFam" id="1.20.120.1760:FF:000001">
    <property type="entry name" value="CDP-diacylglycerol--glycerol-3-phosphate 3-phosphatidyltransferase"/>
    <property type="match status" value="1"/>
</dbReference>
<dbReference type="Gene3D" id="1.20.120.1760">
    <property type="match status" value="1"/>
</dbReference>
<dbReference type="HAMAP" id="MF_01437">
    <property type="entry name" value="PgsA"/>
    <property type="match status" value="1"/>
</dbReference>
<dbReference type="InterPro" id="IPR050324">
    <property type="entry name" value="CDP-alcohol_PTase-I"/>
</dbReference>
<dbReference type="InterPro" id="IPR000462">
    <property type="entry name" value="CDP-OH_P_trans"/>
</dbReference>
<dbReference type="InterPro" id="IPR043130">
    <property type="entry name" value="CDP-OH_PTrfase_TM_dom"/>
</dbReference>
<dbReference type="InterPro" id="IPR048254">
    <property type="entry name" value="CDP_ALCOHOL_P_TRANSF_CS"/>
</dbReference>
<dbReference type="InterPro" id="IPR023762">
    <property type="entry name" value="PGP_synthase_bac"/>
</dbReference>
<dbReference type="InterPro" id="IPR004570">
    <property type="entry name" value="Phosphatidylglycerol_P_synth"/>
</dbReference>
<dbReference type="NCBIfam" id="TIGR00560">
    <property type="entry name" value="pgsA"/>
    <property type="match status" value="1"/>
</dbReference>
<dbReference type="NCBIfam" id="NF008090">
    <property type="entry name" value="PRK10832.1"/>
    <property type="match status" value="1"/>
</dbReference>
<dbReference type="PANTHER" id="PTHR14269:SF62">
    <property type="entry name" value="CDP-DIACYLGLYCEROL--GLYCEROL-3-PHOSPHATE 3-PHOSPHATIDYLTRANSFERASE 1, CHLOROPLASTIC"/>
    <property type="match status" value="1"/>
</dbReference>
<dbReference type="PANTHER" id="PTHR14269">
    <property type="entry name" value="CDP-DIACYLGLYCEROL--GLYCEROL-3-PHOSPHATE 3-PHOSPHATIDYLTRANSFERASE-RELATED"/>
    <property type="match status" value="1"/>
</dbReference>
<dbReference type="Pfam" id="PF01066">
    <property type="entry name" value="CDP-OH_P_transf"/>
    <property type="match status" value="1"/>
</dbReference>
<dbReference type="PIRSF" id="PIRSF000847">
    <property type="entry name" value="Phos_ph_gly_syn"/>
    <property type="match status" value="1"/>
</dbReference>
<dbReference type="PROSITE" id="PS00379">
    <property type="entry name" value="CDP_ALCOHOL_P_TRANSF"/>
    <property type="match status" value="1"/>
</dbReference>
<feature type="chain" id="PRO_0000301866" description="CDP-diacylglycerol--glycerol-3-phosphate 3-phosphatidyltransferase">
    <location>
        <begin position="1"/>
        <end position="182"/>
    </location>
</feature>
<feature type="topological domain" description="Cytoplasmic" evidence="1">
    <location>
        <begin position="1"/>
        <end position="12"/>
    </location>
</feature>
<feature type="transmembrane region" description="Helical" evidence="1">
    <location>
        <begin position="13"/>
        <end position="37"/>
    </location>
</feature>
<feature type="topological domain" description="Periplasmic" evidence="1">
    <location>
        <begin position="38"/>
        <end position="60"/>
    </location>
</feature>
<feature type="transmembrane region" description="Helical" evidence="1">
    <location>
        <begin position="61"/>
        <end position="81"/>
    </location>
</feature>
<feature type="topological domain" description="Cytoplasmic" evidence="1">
    <location>
        <begin position="82"/>
        <end position="86"/>
    </location>
</feature>
<feature type="transmembrane region" description="Helical" evidence="1">
    <location>
        <begin position="87"/>
        <end position="107"/>
    </location>
</feature>
<feature type="topological domain" description="Periplasmic" evidence="1">
    <location>
        <begin position="108"/>
        <end position="145"/>
    </location>
</feature>
<feature type="transmembrane region" description="Helical" evidence="1">
    <location>
        <begin position="146"/>
        <end position="168"/>
    </location>
</feature>
<feature type="topological domain" description="Cytoplasmic" evidence="1">
    <location>
        <begin position="169"/>
        <end position="181"/>
    </location>
</feature>
<sequence length="182" mass="20806">MQLNIPTWLTLFRVVLIPFFVLAFYLPFVWAPMVCAIIFVFAAATDWFDGFLARRWKQTTRFGAFLDPVADKVMVAVALVLVAEHYHSWWITLPAATMIAREIIISSLREWMAEIGKRSSVAVSWVGKVKTMAQMGSLVGLLWRPDHNVELASFVLLYIAAVLTFWSMFQYLNAAWSDLLEP</sequence>
<proteinExistence type="inferred from homology"/>
<accession>Q1C8L0</accession>
<protein>
    <recommendedName>
        <fullName evidence="1">CDP-diacylglycerol--glycerol-3-phosphate 3-phosphatidyltransferase</fullName>
        <ecNumber evidence="1">2.7.8.5</ecNumber>
    </recommendedName>
    <alternativeName>
        <fullName evidence="1">Phosphatidylglycerophosphate synthase</fullName>
        <shortName evidence="1">PGP synthase</shortName>
    </alternativeName>
</protein>